<dbReference type="EC" id="1.6.5.-" evidence="1"/>
<dbReference type="EC" id="1.7.1.17" evidence="1"/>
<dbReference type="EMBL" id="CP000302">
    <property type="protein sequence ID" value="ABE56753.1"/>
    <property type="molecule type" value="Genomic_DNA"/>
</dbReference>
<dbReference type="RefSeq" id="WP_011497894.1">
    <property type="nucleotide sequence ID" value="NC_007954.1"/>
</dbReference>
<dbReference type="SMR" id="Q12IH3"/>
<dbReference type="STRING" id="318161.Sden_3478"/>
<dbReference type="KEGG" id="sdn:Sden_3478"/>
<dbReference type="eggNOG" id="COG1182">
    <property type="taxonomic scope" value="Bacteria"/>
</dbReference>
<dbReference type="HOGENOM" id="CLU_088964_0_0_6"/>
<dbReference type="OrthoDB" id="9787136at2"/>
<dbReference type="Proteomes" id="UP000001982">
    <property type="component" value="Chromosome"/>
</dbReference>
<dbReference type="GO" id="GO:0009055">
    <property type="term" value="F:electron transfer activity"/>
    <property type="evidence" value="ECO:0007669"/>
    <property type="project" value="UniProtKB-UniRule"/>
</dbReference>
<dbReference type="GO" id="GO:0010181">
    <property type="term" value="F:FMN binding"/>
    <property type="evidence" value="ECO:0007669"/>
    <property type="project" value="UniProtKB-UniRule"/>
</dbReference>
<dbReference type="GO" id="GO:0016652">
    <property type="term" value="F:oxidoreductase activity, acting on NAD(P)H as acceptor"/>
    <property type="evidence" value="ECO:0007669"/>
    <property type="project" value="UniProtKB-UniRule"/>
</dbReference>
<dbReference type="GO" id="GO:0016655">
    <property type="term" value="F:oxidoreductase activity, acting on NAD(P)H, quinone or similar compound as acceptor"/>
    <property type="evidence" value="ECO:0007669"/>
    <property type="project" value="InterPro"/>
</dbReference>
<dbReference type="Gene3D" id="3.40.50.360">
    <property type="match status" value="1"/>
</dbReference>
<dbReference type="HAMAP" id="MF_01216">
    <property type="entry name" value="Azoreductase_type1"/>
    <property type="match status" value="1"/>
</dbReference>
<dbReference type="InterPro" id="IPR003680">
    <property type="entry name" value="Flavodoxin_fold"/>
</dbReference>
<dbReference type="InterPro" id="IPR029039">
    <property type="entry name" value="Flavoprotein-like_sf"/>
</dbReference>
<dbReference type="InterPro" id="IPR050104">
    <property type="entry name" value="FMN-dep_NADH:Q_OxRdtase_AzoR1"/>
</dbReference>
<dbReference type="InterPro" id="IPR023048">
    <property type="entry name" value="NADH:quinone_OxRdtase_FMN_depd"/>
</dbReference>
<dbReference type="PANTHER" id="PTHR43741">
    <property type="entry name" value="FMN-DEPENDENT NADH-AZOREDUCTASE 1"/>
    <property type="match status" value="1"/>
</dbReference>
<dbReference type="PANTHER" id="PTHR43741:SF2">
    <property type="entry name" value="FMN-DEPENDENT NADH:QUINONE OXIDOREDUCTASE"/>
    <property type="match status" value="1"/>
</dbReference>
<dbReference type="Pfam" id="PF02525">
    <property type="entry name" value="Flavodoxin_2"/>
    <property type="match status" value="1"/>
</dbReference>
<dbReference type="SUPFAM" id="SSF52218">
    <property type="entry name" value="Flavoproteins"/>
    <property type="match status" value="1"/>
</dbReference>
<name>AZOR_SHEDO</name>
<sequence>MAKVLVLKSSILGDYSQSSALIGHLMSHWQQQGAQMTVRDLAADPVPVLDGEIATGMRGGDNLSPRQQQVLDLSDELIAELKSHDTLVIAAPMYNFSIPTQLKNWIDLIARAGVTFTYTETGPKGLLEGKRAVVVTTRGGMHKEGASDHIVPYLKTVLGFIGITEVEFVYAEALNMGPDATAQGLLEAKTALDSLTA</sequence>
<reference key="1">
    <citation type="submission" date="2006-03" db="EMBL/GenBank/DDBJ databases">
        <title>Complete sequence of Shewanella denitrificans OS217.</title>
        <authorList>
            <consortium name="US DOE Joint Genome Institute"/>
            <person name="Copeland A."/>
            <person name="Lucas S."/>
            <person name="Lapidus A."/>
            <person name="Barry K."/>
            <person name="Detter J.C."/>
            <person name="Glavina del Rio T."/>
            <person name="Hammon N."/>
            <person name="Israni S."/>
            <person name="Dalin E."/>
            <person name="Tice H."/>
            <person name="Pitluck S."/>
            <person name="Brettin T."/>
            <person name="Bruce D."/>
            <person name="Han C."/>
            <person name="Tapia R."/>
            <person name="Gilna P."/>
            <person name="Kiss H."/>
            <person name="Schmutz J."/>
            <person name="Larimer F."/>
            <person name="Land M."/>
            <person name="Hauser L."/>
            <person name="Kyrpides N."/>
            <person name="Lykidis A."/>
            <person name="Richardson P."/>
        </authorList>
    </citation>
    <scope>NUCLEOTIDE SEQUENCE [LARGE SCALE GENOMIC DNA]</scope>
    <source>
        <strain>OS217 / ATCC BAA-1090 / DSM 15013</strain>
    </source>
</reference>
<accession>Q12IH3</accession>
<keyword id="KW-0285">Flavoprotein</keyword>
<keyword id="KW-0288">FMN</keyword>
<keyword id="KW-0520">NAD</keyword>
<keyword id="KW-0560">Oxidoreductase</keyword>
<keyword id="KW-1185">Reference proteome</keyword>
<proteinExistence type="inferred from homology"/>
<protein>
    <recommendedName>
        <fullName evidence="1">FMN-dependent NADH:quinone oxidoreductase</fullName>
        <ecNumber evidence="1">1.6.5.-</ecNumber>
    </recommendedName>
    <alternativeName>
        <fullName evidence="1">Azo-dye reductase</fullName>
    </alternativeName>
    <alternativeName>
        <fullName evidence="1">FMN-dependent NADH-azo compound oxidoreductase</fullName>
    </alternativeName>
    <alternativeName>
        <fullName evidence="1">FMN-dependent NADH-azoreductase</fullName>
        <ecNumber evidence="1">1.7.1.17</ecNumber>
    </alternativeName>
</protein>
<evidence type="ECO:0000255" key="1">
    <source>
        <dbReference type="HAMAP-Rule" id="MF_01216"/>
    </source>
</evidence>
<feature type="chain" id="PRO_1000066522" description="FMN-dependent NADH:quinone oxidoreductase">
    <location>
        <begin position="1"/>
        <end position="197"/>
    </location>
</feature>
<feature type="binding site" evidence="1">
    <location>
        <position position="10"/>
    </location>
    <ligand>
        <name>FMN</name>
        <dbReference type="ChEBI" id="CHEBI:58210"/>
    </ligand>
</feature>
<feature type="binding site" evidence="1">
    <location>
        <begin position="16"/>
        <end position="18"/>
    </location>
    <ligand>
        <name>FMN</name>
        <dbReference type="ChEBI" id="CHEBI:58210"/>
    </ligand>
</feature>
<feature type="binding site" evidence="1">
    <location>
        <begin position="93"/>
        <end position="96"/>
    </location>
    <ligand>
        <name>FMN</name>
        <dbReference type="ChEBI" id="CHEBI:58210"/>
    </ligand>
</feature>
<feature type="binding site" evidence="1">
    <location>
        <begin position="137"/>
        <end position="140"/>
    </location>
    <ligand>
        <name>FMN</name>
        <dbReference type="ChEBI" id="CHEBI:58210"/>
    </ligand>
</feature>
<comment type="function">
    <text evidence="1">Quinone reductase that provides resistance to thiol-specific stress caused by electrophilic quinones.</text>
</comment>
<comment type="function">
    <text evidence="1">Also exhibits azoreductase activity. Catalyzes the reductive cleavage of the azo bond in aromatic azo compounds to the corresponding amines.</text>
</comment>
<comment type="catalytic activity">
    <reaction evidence="1">
        <text>2 a quinone + NADH + H(+) = 2 a 1,4-benzosemiquinone + NAD(+)</text>
        <dbReference type="Rhea" id="RHEA:65952"/>
        <dbReference type="ChEBI" id="CHEBI:15378"/>
        <dbReference type="ChEBI" id="CHEBI:57540"/>
        <dbReference type="ChEBI" id="CHEBI:57945"/>
        <dbReference type="ChEBI" id="CHEBI:132124"/>
        <dbReference type="ChEBI" id="CHEBI:134225"/>
    </reaction>
</comment>
<comment type="catalytic activity">
    <reaction evidence="1">
        <text>N,N-dimethyl-1,4-phenylenediamine + anthranilate + 2 NAD(+) = 2-(4-dimethylaminophenyl)diazenylbenzoate + 2 NADH + 2 H(+)</text>
        <dbReference type="Rhea" id="RHEA:55872"/>
        <dbReference type="ChEBI" id="CHEBI:15378"/>
        <dbReference type="ChEBI" id="CHEBI:15783"/>
        <dbReference type="ChEBI" id="CHEBI:16567"/>
        <dbReference type="ChEBI" id="CHEBI:57540"/>
        <dbReference type="ChEBI" id="CHEBI:57945"/>
        <dbReference type="ChEBI" id="CHEBI:71579"/>
        <dbReference type="EC" id="1.7.1.17"/>
    </reaction>
</comment>
<comment type="cofactor">
    <cofactor evidence="1">
        <name>FMN</name>
        <dbReference type="ChEBI" id="CHEBI:58210"/>
    </cofactor>
    <text evidence="1">Binds 1 FMN per subunit.</text>
</comment>
<comment type="subunit">
    <text evidence="1">Homodimer.</text>
</comment>
<comment type="similarity">
    <text evidence="1">Belongs to the azoreductase type 1 family.</text>
</comment>
<gene>
    <name evidence="1" type="primary">azoR</name>
    <name type="ordered locus">Sden_3478</name>
</gene>
<organism>
    <name type="scientific">Shewanella denitrificans (strain OS217 / ATCC BAA-1090 / DSM 15013)</name>
    <dbReference type="NCBI Taxonomy" id="318161"/>
    <lineage>
        <taxon>Bacteria</taxon>
        <taxon>Pseudomonadati</taxon>
        <taxon>Pseudomonadota</taxon>
        <taxon>Gammaproteobacteria</taxon>
        <taxon>Alteromonadales</taxon>
        <taxon>Shewanellaceae</taxon>
        <taxon>Shewanella</taxon>
    </lineage>
</organism>